<accession>B5QWY5</accession>
<name>RHAR_SALEP</name>
<proteinExistence type="inferred from homology"/>
<evidence type="ECO:0000255" key="1">
    <source>
        <dbReference type="HAMAP-Rule" id="MF_01533"/>
    </source>
</evidence>
<organism>
    <name type="scientific">Salmonella enteritidis PT4 (strain P125109)</name>
    <dbReference type="NCBI Taxonomy" id="550537"/>
    <lineage>
        <taxon>Bacteria</taxon>
        <taxon>Pseudomonadati</taxon>
        <taxon>Pseudomonadota</taxon>
        <taxon>Gammaproteobacteria</taxon>
        <taxon>Enterobacterales</taxon>
        <taxon>Enterobacteriaceae</taxon>
        <taxon>Salmonella</taxon>
    </lineage>
</organism>
<comment type="function">
    <text evidence="1">Activates expression of the rhaSR operon in response to L-rhamnose.</text>
</comment>
<comment type="subunit">
    <text evidence="1">Binds DNA as a dimer.</text>
</comment>
<comment type="subcellular location">
    <subcellularLocation>
        <location evidence="1">Cytoplasm</location>
    </subcellularLocation>
</comment>
<reference key="1">
    <citation type="journal article" date="2008" name="Genome Res.">
        <title>Comparative genome analysis of Salmonella enteritidis PT4 and Salmonella gallinarum 287/91 provides insights into evolutionary and host adaptation pathways.</title>
        <authorList>
            <person name="Thomson N.R."/>
            <person name="Clayton D.J."/>
            <person name="Windhorst D."/>
            <person name="Vernikos G."/>
            <person name="Davidson S."/>
            <person name="Churcher C."/>
            <person name="Quail M.A."/>
            <person name="Stevens M."/>
            <person name="Jones M.A."/>
            <person name="Watson M."/>
            <person name="Barron A."/>
            <person name="Layton A."/>
            <person name="Pickard D."/>
            <person name="Kingsley R.A."/>
            <person name="Bignell A."/>
            <person name="Clark L."/>
            <person name="Harris B."/>
            <person name="Ormond D."/>
            <person name="Abdellah Z."/>
            <person name="Brooks K."/>
            <person name="Cherevach I."/>
            <person name="Chillingworth T."/>
            <person name="Woodward J."/>
            <person name="Norberczak H."/>
            <person name="Lord A."/>
            <person name="Arrowsmith C."/>
            <person name="Jagels K."/>
            <person name="Moule S."/>
            <person name="Mungall K."/>
            <person name="Saunders M."/>
            <person name="Whitehead S."/>
            <person name="Chabalgoity J.A."/>
            <person name="Maskell D."/>
            <person name="Humphreys T."/>
            <person name="Roberts M."/>
            <person name="Barrow P.A."/>
            <person name="Dougan G."/>
            <person name="Parkhill J."/>
        </authorList>
    </citation>
    <scope>NUCLEOTIDE SEQUENCE [LARGE SCALE GENOMIC DNA]</scope>
    <source>
        <strain>P125109</strain>
    </source>
</reference>
<dbReference type="EMBL" id="AM933172">
    <property type="protein sequence ID" value="CAR35413.1"/>
    <property type="molecule type" value="Genomic_DNA"/>
</dbReference>
<dbReference type="RefSeq" id="WP_000013290.1">
    <property type="nucleotide sequence ID" value="NC_011294.1"/>
</dbReference>
<dbReference type="SMR" id="B5QWY5"/>
<dbReference type="KEGG" id="set:SEN3840"/>
<dbReference type="HOGENOM" id="CLU_000445_88_5_6"/>
<dbReference type="Proteomes" id="UP000000613">
    <property type="component" value="Chromosome"/>
</dbReference>
<dbReference type="GO" id="GO:0005737">
    <property type="term" value="C:cytoplasm"/>
    <property type="evidence" value="ECO:0007669"/>
    <property type="project" value="UniProtKB-SubCell"/>
</dbReference>
<dbReference type="GO" id="GO:0003700">
    <property type="term" value="F:DNA-binding transcription factor activity"/>
    <property type="evidence" value="ECO:0007669"/>
    <property type="project" value="UniProtKB-UniRule"/>
</dbReference>
<dbReference type="GO" id="GO:0043565">
    <property type="term" value="F:sequence-specific DNA binding"/>
    <property type="evidence" value="ECO:0007669"/>
    <property type="project" value="InterPro"/>
</dbReference>
<dbReference type="GO" id="GO:0045893">
    <property type="term" value="P:positive regulation of DNA-templated transcription"/>
    <property type="evidence" value="ECO:0007669"/>
    <property type="project" value="UniProtKB-UniRule"/>
</dbReference>
<dbReference type="GO" id="GO:0019299">
    <property type="term" value="P:rhamnose metabolic process"/>
    <property type="evidence" value="ECO:0007669"/>
    <property type="project" value="UniProtKB-UniRule"/>
</dbReference>
<dbReference type="CDD" id="cd06977">
    <property type="entry name" value="cupin_RhaR_RhaS-like_N"/>
    <property type="match status" value="1"/>
</dbReference>
<dbReference type="Gene3D" id="1.10.10.60">
    <property type="entry name" value="Homeodomain-like"/>
    <property type="match status" value="2"/>
</dbReference>
<dbReference type="Gene3D" id="2.60.120.10">
    <property type="entry name" value="Jelly Rolls"/>
    <property type="match status" value="1"/>
</dbReference>
<dbReference type="HAMAP" id="MF_01533">
    <property type="entry name" value="HTH_type_RhaR"/>
    <property type="match status" value="1"/>
</dbReference>
<dbReference type="InterPro" id="IPR003313">
    <property type="entry name" value="AraC-bd"/>
</dbReference>
<dbReference type="InterPro" id="IPR009057">
    <property type="entry name" value="Homeodomain-like_sf"/>
</dbReference>
<dbReference type="InterPro" id="IPR018060">
    <property type="entry name" value="HTH_AraC"/>
</dbReference>
<dbReference type="InterPro" id="IPR018062">
    <property type="entry name" value="HTH_AraC-typ_CS"/>
</dbReference>
<dbReference type="InterPro" id="IPR047220">
    <property type="entry name" value="RhaR_RhaS-like_N"/>
</dbReference>
<dbReference type="InterPro" id="IPR014710">
    <property type="entry name" value="RmlC-like_jellyroll"/>
</dbReference>
<dbReference type="InterPro" id="IPR011051">
    <property type="entry name" value="RmlC_Cupin_sf"/>
</dbReference>
<dbReference type="InterPro" id="IPR023699">
    <property type="entry name" value="Tscrpt_act_RhaR"/>
</dbReference>
<dbReference type="InterPro" id="IPR020449">
    <property type="entry name" value="Tscrpt_reg_AraC-type_HTH"/>
</dbReference>
<dbReference type="NCBIfam" id="NF010025">
    <property type="entry name" value="PRK13500.1"/>
    <property type="match status" value="1"/>
</dbReference>
<dbReference type="NCBIfam" id="NF010026">
    <property type="entry name" value="PRK13501.1"/>
    <property type="match status" value="1"/>
</dbReference>
<dbReference type="NCBIfam" id="NF010027">
    <property type="entry name" value="PRK13502.1"/>
    <property type="match status" value="1"/>
</dbReference>
<dbReference type="PANTHER" id="PTHR43280">
    <property type="entry name" value="ARAC-FAMILY TRANSCRIPTIONAL REGULATOR"/>
    <property type="match status" value="1"/>
</dbReference>
<dbReference type="PANTHER" id="PTHR43280:SF13">
    <property type="entry name" value="HTH-TYPE TRANSCRIPTIONAL ACTIVATOR RHAR"/>
    <property type="match status" value="1"/>
</dbReference>
<dbReference type="Pfam" id="PF02311">
    <property type="entry name" value="AraC_binding"/>
    <property type="match status" value="1"/>
</dbReference>
<dbReference type="Pfam" id="PF12833">
    <property type="entry name" value="HTH_18"/>
    <property type="match status" value="1"/>
</dbReference>
<dbReference type="PRINTS" id="PR00032">
    <property type="entry name" value="HTHARAC"/>
</dbReference>
<dbReference type="SMART" id="SM00342">
    <property type="entry name" value="HTH_ARAC"/>
    <property type="match status" value="1"/>
</dbReference>
<dbReference type="SUPFAM" id="SSF46689">
    <property type="entry name" value="Homeodomain-like"/>
    <property type="match status" value="1"/>
</dbReference>
<dbReference type="SUPFAM" id="SSF51182">
    <property type="entry name" value="RmlC-like cupins"/>
    <property type="match status" value="1"/>
</dbReference>
<dbReference type="PROSITE" id="PS00041">
    <property type="entry name" value="HTH_ARAC_FAMILY_1"/>
    <property type="match status" value="1"/>
</dbReference>
<dbReference type="PROSITE" id="PS01124">
    <property type="entry name" value="HTH_ARAC_FAMILY_2"/>
    <property type="match status" value="1"/>
</dbReference>
<feature type="chain" id="PRO_1000200940" description="HTH-type transcriptional activator RhaR">
    <location>
        <begin position="1"/>
        <end position="282"/>
    </location>
</feature>
<feature type="domain" description="HTH araC/xylS-type" evidence="1">
    <location>
        <begin position="179"/>
        <end position="277"/>
    </location>
</feature>
<feature type="DNA-binding region" description="H-T-H motif" evidence="1">
    <location>
        <begin position="196"/>
        <end position="217"/>
    </location>
</feature>
<feature type="DNA-binding region" description="H-T-H motif" evidence="1">
    <location>
        <begin position="244"/>
        <end position="267"/>
    </location>
</feature>
<feature type="site" description="Interaction with sigma-70" evidence="1">
    <location>
        <position position="246"/>
    </location>
</feature>
<keyword id="KW-0010">Activator</keyword>
<keyword id="KW-0963">Cytoplasm</keyword>
<keyword id="KW-0238">DNA-binding</keyword>
<keyword id="KW-0677">Repeat</keyword>
<keyword id="KW-0684">Rhamnose metabolism</keyword>
<keyword id="KW-0804">Transcription</keyword>
<keyword id="KW-0805">Transcription regulation</keyword>
<protein>
    <recommendedName>
        <fullName evidence="1">HTH-type transcriptional activator RhaR</fullName>
    </recommendedName>
    <alternativeName>
        <fullName evidence="1">L-rhamnose operon transcriptional activator RhaR</fullName>
    </alternativeName>
</protein>
<gene>
    <name evidence="1" type="primary">rhaR</name>
    <name type="ordered locus">SEN3840</name>
</gene>
<sequence length="282" mass="32858">MANQLILLKKDFFTDEQQAVTVADRYPQDVFAEHTHEFCELVMVWRGNGLHVLNERPYRITRGDLFYIRAEDKHSYTSVNDLVLQNIIYCPERLKLNVNWQAMIPGFQGAQWHPHWRLGSMGMNQARQVINQLEHESNGRDPLANEMAELLFGQLVMTLKRHRYATDDLPATSRETLLDKLITALANSLECPFALDAFCQQEQCSERVLRQQFRAQTGMTINQYLRQVRICHAQYLLQHSPLMISEISMQCGFEDSNYFSVVFTRETGMTPSQWRHLSNQSD</sequence>